<name>Y1895_CHRSD</name>
<organism>
    <name type="scientific">Chromohalobacter salexigens (strain ATCC BAA-138 / DSM 3043 / CIP 106854 / NCIMB 13768 / 1H11)</name>
    <dbReference type="NCBI Taxonomy" id="290398"/>
    <lineage>
        <taxon>Bacteria</taxon>
        <taxon>Pseudomonadati</taxon>
        <taxon>Pseudomonadota</taxon>
        <taxon>Gammaproteobacteria</taxon>
        <taxon>Oceanospirillales</taxon>
        <taxon>Halomonadaceae</taxon>
        <taxon>Chromohalobacter</taxon>
    </lineage>
</organism>
<reference key="1">
    <citation type="journal article" date="2011" name="Stand. Genomic Sci.">
        <title>Complete genome sequence of the halophilic and highly halotolerant Chromohalobacter salexigens type strain (1H11(T)).</title>
        <authorList>
            <person name="Copeland A."/>
            <person name="O'Connor K."/>
            <person name="Lucas S."/>
            <person name="Lapidus A."/>
            <person name="Berry K.W."/>
            <person name="Detter J.C."/>
            <person name="Del Rio T.G."/>
            <person name="Hammon N."/>
            <person name="Dalin E."/>
            <person name="Tice H."/>
            <person name="Pitluck S."/>
            <person name="Bruce D."/>
            <person name="Goodwin L."/>
            <person name="Han C."/>
            <person name="Tapia R."/>
            <person name="Saunders E."/>
            <person name="Schmutz J."/>
            <person name="Brettin T."/>
            <person name="Larimer F."/>
            <person name="Land M."/>
            <person name="Hauser L."/>
            <person name="Vargas C."/>
            <person name="Nieto J.J."/>
            <person name="Kyrpides N.C."/>
            <person name="Ivanova N."/>
            <person name="Goker M."/>
            <person name="Klenk H.P."/>
            <person name="Csonka L.N."/>
            <person name="Woyke T."/>
        </authorList>
    </citation>
    <scope>NUCLEOTIDE SEQUENCE [LARGE SCALE GENOMIC DNA]</scope>
    <source>
        <strain>ATCC BAA-138 / DSM 3043 / CIP 106854 / NCIMB 13768 / 1H11</strain>
    </source>
</reference>
<evidence type="ECO:0000255" key="1">
    <source>
        <dbReference type="HAMAP-Rule" id="MF_00672"/>
    </source>
</evidence>
<dbReference type="EMBL" id="CP000285">
    <property type="protein sequence ID" value="ABE59247.1"/>
    <property type="molecule type" value="Genomic_DNA"/>
</dbReference>
<dbReference type="RefSeq" id="WP_011507193.1">
    <property type="nucleotide sequence ID" value="NC_007963.1"/>
</dbReference>
<dbReference type="SMR" id="Q1QWB1"/>
<dbReference type="STRING" id="290398.Csal_1895"/>
<dbReference type="GeneID" id="95334611"/>
<dbReference type="KEGG" id="csa:Csal_1895"/>
<dbReference type="eggNOG" id="COG1295">
    <property type="taxonomic scope" value="Bacteria"/>
</dbReference>
<dbReference type="HOGENOM" id="CLU_032288_1_0_6"/>
<dbReference type="OrthoDB" id="9808671at2"/>
<dbReference type="Proteomes" id="UP000000239">
    <property type="component" value="Chromosome"/>
</dbReference>
<dbReference type="GO" id="GO:0005886">
    <property type="term" value="C:plasma membrane"/>
    <property type="evidence" value="ECO:0007669"/>
    <property type="project" value="UniProtKB-SubCell"/>
</dbReference>
<dbReference type="HAMAP" id="MF_00672">
    <property type="entry name" value="UPF0761"/>
    <property type="match status" value="1"/>
</dbReference>
<dbReference type="InterPro" id="IPR023679">
    <property type="entry name" value="UPF0761_bac"/>
</dbReference>
<dbReference type="InterPro" id="IPR017039">
    <property type="entry name" value="Virul_fac_BrkB"/>
</dbReference>
<dbReference type="NCBIfam" id="TIGR00765">
    <property type="entry name" value="yihY_not_rbn"/>
    <property type="match status" value="1"/>
</dbReference>
<dbReference type="PANTHER" id="PTHR30213">
    <property type="entry name" value="INNER MEMBRANE PROTEIN YHJD"/>
    <property type="match status" value="1"/>
</dbReference>
<dbReference type="PANTHER" id="PTHR30213:SF0">
    <property type="entry name" value="UPF0761 MEMBRANE PROTEIN YIHY"/>
    <property type="match status" value="1"/>
</dbReference>
<dbReference type="Pfam" id="PF03631">
    <property type="entry name" value="Virul_fac_BrkB"/>
    <property type="match status" value="1"/>
</dbReference>
<proteinExistence type="inferred from homology"/>
<gene>
    <name type="ordered locus">Csal_1895</name>
</gene>
<sequence length="410" mass="45949">MRRPQLLDRRWLTIILRSLRELIQRFDAHDGLKTASALTYTTLFAVVPFMTVLYAMLSAIPSFQGISEQLQALIFSQFVPATGSALVEHLRDFSRQARSLTLIGLMFLLVTAVMMMVTVERAFNNIWHVSRSRRGVSSFLLYWAVLTLGPLLLGSGFLLSSYLASLTLVRGAAEVLGGPVAFLRLLPLTLSFTAFVFIYMAVPNCRVRFRHAVAGAGLAALALELAKGAFSLYVTYFPSYQVIYGTFAAVPLFLVWVFLSWAIVLVGAELAAWLGERRRAEWRYWAPFWQALGVVSHLYDAHRRGQAVYDRELAMRLGARYSDVMAPLQTLGVAVQLDNDRWMLGRDLGALSLWDFQRAMPWAVPLGESSPAPEMQAIHAALQEAERHRQQVLTQPMEHLLAEGARNDSP</sequence>
<comment type="subcellular location">
    <subcellularLocation>
        <location evidence="1">Cell inner membrane</location>
        <topology evidence="1">Multi-pass membrane protein</topology>
    </subcellularLocation>
</comment>
<comment type="similarity">
    <text evidence="1">Belongs to the UPF0761 family.</text>
</comment>
<protein>
    <recommendedName>
        <fullName evidence="1">UPF0761 membrane protein Csal_1895</fullName>
    </recommendedName>
</protein>
<accession>Q1QWB1</accession>
<feature type="chain" id="PRO_0000391031" description="UPF0761 membrane protein Csal_1895">
    <location>
        <begin position="1"/>
        <end position="410"/>
    </location>
</feature>
<feature type="transmembrane region" description="Helical" evidence="1">
    <location>
        <begin position="43"/>
        <end position="63"/>
    </location>
</feature>
<feature type="transmembrane region" description="Helical" evidence="1">
    <location>
        <begin position="99"/>
        <end position="119"/>
    </location>
</feature>
<feature type="transmembrane region" description="Helical" evidence="1">
    <location>
        <begin position="139"/>
        <end position="159"/>
    </location>
</feature>
<feature type="transmembrane region" description="Helical" evidence="1">
    <location>
        <begin position="180"/>
        <end position="200"/>
    </location>
</feature>
<feature type="transmembrane region" description="Helical" evidence="1">
    <location>
        <begin position="212"/>
        <end position="232"/>
    </location>
</feature>
<feature type="transmembrane region" description="Helical" evidence="1">
    <location>
        <begin position="247"/>
        <end position="267"/>
    </location>
</feature>
<keyword id="KW-0997">Cell inner membrane</keyword>
<keyword id="KW-1003">Cell membrane</keyword>
<keyword id="KW-0472">Membrane</keyword>
<keyword id="KW-1185">Reference proteome</keyword>
<keyword id="KW-0812">Transmembrane</keyword>
<keyword id="KW-1133">Transmembrane helix</keyword>